<accession>B7VL97</accession>
<keyword id="KW-0963">Cytoplasm</keyword>
<keyword id="KW-0238">DNA-binding</keyword>
<name>Y917_VIBA3</name>
<organism>
    <name type="scientific">Vibrio atlanticus (strain LGP32)</name>
    <name type="common">Vibrio splendidus (strain Mel32)</name>
    <dbReference type="NCBI Taxonomy" id="575788"/>
    <lineage>
        <taxon>Bacteria</taxon>
        <taxon>Pseudomonadati</taxon>
        <taxon>Pseudomonadota</taxon>
        <taxon>Gammaproteobacteria</taxon>
        <taxon>Vibrionales</taxon>
        <taxon>Vibrionaceae</taxon>
        <taxon>Vibrio</taxon>
    </lineage>
</organism>
<protein>
    <recommendedName>
        <fullName evidence="1">Nucleoid-associated protein VS_0917</fullName>
    </recommendedName>
</protein>
<reference key="1">
    <citation type="submission" date="2009-02" db="EMBL/GenBank/DDBJ databases">
        <title>Vibrio splendidus str. LGP32 complete genome.</title>
        <authorList>
            <person name="Mazel D."/>
            <person name="Le Roux F."/>
        </authorList>
    </citation>
    <scope>NUCLEOTIDE SEQUENCE [LARGE SCALE GENOMIC DNA]</scope>
    <source>
        <strain>LGP32</strain>
    </source>
</reference>
<feature type="chain" id="PRO_1000197686" description="Nucleoid-associated protein VS_0917">
    <location>
        <begin position="1"/>
        <end position="109"/>
    </location>
</feature>
<feature type="region of interest" description="Disordered" evidence="2">
    <location>
        <begin position="1"/>
        <end position="22"/>
    </location>
</feature>
<feature type="region of interest" description="Disordered" evidence="2">
    <location>
        <begin position="88"/>
        <end position="109"/>
    </location>
</feature>
<feature type="compositionally biased region" description="Low complexity" evidence="2">
    <location>
        <begin position="9"/>
        <end position="18"/>
    </location>
</feature>
<sequence length="109" mass="12011">MFGKGGMGNMMKQAQQMQERMQKLQEEIANMEVTGESGAGLVKVTITGSHSVRRVDIDESLMEDDKEMLEDLIAAAFNDAARRVEETQKEKMAGVTGGMQLPPGMKMPF</sequence>
<gene>
    <name type="ordered locus">VS_0917</name>
</gene>
<dbReference type="EMBL" id="FM954972">
    <property type="protein sequence ID" value="CAV17929.1"/>
    <property type="molecule type" value="Genomic_DNA"/>
</dbReference>
<dbReference type="SMR" id="B7VL97"/>
<dbReference type="STRING" id="575788.VS_0917"/>
<dbReference type="KEGG" id="vsp:VS_0917"/>
<dbReference type="eggNOG" id="COG0718">
    <property type="taxonomic scope" value="Bacteria"/>
</dbReference>
<dbReference type="HOGENOM" id="CLU_140930_0_0_6"/>
<dbReference type="Proteomes" id="UP000009100">
    <property type="component" value="Chromosome 1"/>
</dbReference>
<dbReference type="GO" id="GO:0043590">
    <property type="term" value="C:bacterial nucleoid"/>
    <property type="evidence" value="ECO:0007669"/>
    <property type="project" value="UniProtKB-UniRule"/>
</dbReference>
<dbReference type="GO" id="GO:0005829">
    <property type="term" value="C:cytosol"/>
    <property type="evidence" value="ECO:0007669"/>
    <property type="project" value="TreeGrafter"/>
</dbReference>
<dbReference type="GO" id="GO:0003677">
    <property type="term" value="F:DNA binding"/>
    <property type="evidence" value="ECO:0007669"/>
    <property type="project" value="UniProtKB-UniRule"/>
</dbReference>
<dbReference type="FunFam" id="3.30.1310.10:FF:000001">
    <property type="entry name" value="Nucleoid-associated protein YbaB"/>
    <property type="match status" value="1"/>
</dbReference>
<dbReference type="Gene3D" id="3.30.1310.10">
    <property type="entry name" value="Nucleoid-associated protein YbaB-like domain"/>
    <property type="match status" value="1"/>
</dbReference>
<dbReference type="HAMAP" id="MF_00274">
    <property type="entry name" value="DNA_YbaB_EbfC"/>
    <property type="match status" value="1"/>
</dbReference>
<dbReference type="InterPro" id="IPR036894">
    <property type="entry name" value="YbaB-like_sf"/>
</dbReference>
<dbReference type="InterPro" id="IPR004401">
    <property type="entry name" value="YbaB/EbfC"/>
</dbReference>
<dbReference type="NCBIfam" id="TIGR00103">
    <property type="entry name" value="DNA_YbaB_EbfC"/>
    <property type="match status" value="1"/>
</dbReference>
<dbReference type="PANTHER" id="PTHR33449">
    <property type="entry name" value="NUCLEOID-ASSOCIATED PROTEIN YBAB"/>
    <property type="match status" value="1"/>
</dbReference>
<dbReference type="PANTHER" id="PTHR33449:SF1">
    <property type="entry name" value="NUCLEOID-ASSOCIATED PROTEIN YBAB"/>
    <property type="match status" value="1"/>
</dbReference>
<dbReference type="Pfam" id="PF02575">
    <property type="entry name" value="YbaB_DNA_bd"/>
    <property type="match status" value="1"/>
</dbReference>
<dbReference type="PIRSF" id="PIRSF004555">
    <property type="entry name" value="UCP004555"/>
    <property type="match status" value="1"/>
</dbReference>
<dbReference type="SUPFAM" id="SSF82607">
    <property type="entry name" value="YbaB-like"/>
    <property type="match status" value="1"/>
</dbReference>
<comment type="function">
    <text evidence="1">Binds to DNA and alters its conformation. May be involved in regulation of gene expression, nucleoid organization and DNA protection.</text>
</comment>
<comment type="subunit">
    <text evidence="1">Homodimer.</text>
</comment>
<comment type="subcellular location">
    <subcellularLocation>
        <location evidence="1">Cytoplasm</location>
        <location evidence="1">Nucleoid</location>
    </subcellularLocation>
</comment>
<comment type="similarity">
    <text evidence="1">Belongs to the YbaB/EbfC family.</text>
</comment>
<evidence type="ECO:0000255" key="1">
    <source>
        <dbReference type="HAMAP-Rule" id="MF_00274"/>
    </source>
</evidence>
<evidence type="ECO:0000256" key="2">
    <source>
        <dbReference type="SAM" id="MobiDB-lite"/>
    </source>
</evidence>
<proteinExistence type="inferred from homology"/>